<dbReference type="EC" id="2.7.3.9" evidence="1"/>
<dbReference type="EMBL" id="U00089">
    <property type="protein sequence ID" value="AAB95863.1"/>
    <property type="molecule type" value="Genomic_DNA"/>
</dbReference>
<dbReference type="PIR" id="S73541">
    <property type="entry name" value="S73541"/>
</dbReference>
<dbReference type="RefSeq" id="NP_110316.1">
    <property type="nucleotide sequence ID" value="NC_000912.1"/>
</dbReference>
<dbReference type="SMR" id="P75168"/>
<dbReference type="IntAct" id="P75168">
    <property type="interactions" value="1"/>
</dbReference>
<dbReference type="STRING" id="272634.MPN_627"/>
<dbReference type="EnsemblBacteria" id="AAB95863">
    <property type="protein sequence ID" value="AAB95863"/>
    <property type="gene ID" value="MPN_627"/>
</dbReference>
<dbReference type="KEGG" id="mpn:MPN_627"/>
<dbReference type="PATRIC" id="fig|272634.6.peg.691"/>
<dbReference type="HOGENOM" id="CLU_007308_7_0_14"/>
<dbReference type="OrthoDB" id="9765468at2"/>
<dbReference type="BioCyc" id="MPNE272634:G1GJ3-1008-MONOMER"/>
<dbReference type="Proteomes" id="UP000000808">
    <property type="component" value="Chromosome"/>
</dbReference>
<dbReference type="GO" id="GO:0005737">
    <property type="term" value="C:cytoplasm"/>
    <property type="evidence" value="ECO:0007669"/>
    <property type="project" value="UniProtKB-SubCell"/>
</dbReference>
<dbReference type="GO" id="GO:0016301">
    <property type="term" value="F:kinase activity"/>
    <property type="evidence" value="ECO:0007669"/>
    <property type="project" value="UniProtKB-KW"/>
</dbReference>
<dbReference type="GO" id="GO:0046872">
    <property type="term" value="F:metal ion binding"/>
    <property type="evidence" value="ECO:0007669"/>
    <property type="project" value="UniProtKB-KW"/>
</dbReference>
<dbReference type="GO" id="GO:0008965">
    <property type="term" value="F:phosphoenolpyruvate-protein phosphotransferase activity"/>
    <property type="evidence" value="ECO:0007669"/>
    <property type="project" value="UniProtKB-EC"/>
</dbReference>
<dbReference type="GO" id="GO:0009401">
    <property type="term" value="P:phosphoenolpyruvate-dependent sugar phosphotransferase system"/>
    <property type="evidence" value="ECO:0007669"/>
    <property type="project" value="UniProtKB-KW"/>
</dbReference>
<dbReference type="Gene3D" id="3.20.20.60">
    <property type="entry name" value="Phosphoenolpyruvate-binding domains"/>
    <property type="match status" value="1"/>
</dbReference>
<dbReference type="Gene3D" id="3.50.30.10">
    <property type="entry name" value="Phosphohistidine domain"/>
    <property type="match status" value="1"/>
</dbReference>
<dbReference type="Gene3D" id="1.10.274.10">
    <property type="entry name" value="PtsI, HPr-binding domain"/>
    <property type="match status" value="1"/>
</dbReference>
<dbReference type="InterPro" id="IPR008279">
    <property type="entry name" value="PEP-util_enz_mobile_dom"/>
</dbReference>
<dbReference type="InterPro" id="IPR050499">
    <property type="entry name" value="PEP-utilizing_PTS_enzyme"/>
</dbReference>
<dbReference type="InterPro" id="IPR018274">
    <property type="entry name" value="PEP_util_AS"/>
</dbReference>
<dbReference type="InterPro" id="IPR000121">
    <property type="entry name" value="PEP_util_C"/>
</dbReference>
<dbReference type="InterPro" id="IPR023151">
    <property type="entry name" value="PEP_util_CS"/>
</dbReference>
<dbReference type="InterPro" id="IPR036637">
    <property type="entry name" value="Phosphohistidine_dom_sf"/>
</dbReference>
<dbReference type="InterPro" id="IPR024692">
    <property type="entry name" value="PTS_EI"/>
</dbReference>
<dbReference type="InterPro" id="IPR006318">
    <property type="entry name" value="PTS_EI-like"/>
</dbReference>
<dbReference type="InterPro" id="IPR008731">
    <property type="entry name" value="PTS_EIN"/>
</dbReference>
<dbReference type="InterPro" id="IPR036618">
    <property type="entry name" value="PtsI_HPr-bd_sf"/>
</dbReference>
<dbReference type="InterPro" id="IPR015813">
    <property type="entry name" value="Pyrv/PenolPyrv_kinase-like_dom"/>
</dbReference>
<dbReference type="InterPro" id="IPR040442">
    <property type="entry name" value="Pyrv_kinase-like_dom_sf"/>
</dbReference>
<dbReference type="NCBIfam" id="TIGR01417">
    <property type="entry name" value="PTS_I_fam"/>
    <property type="match status" value="1"/>
</dbReference>
<dbReference type="PANTHER" id="PTHR46244">
    <property type="entry name" value="PHOSPHOENOLPYRUVATE-PROTEIN PHOSPHOTRANSFERASE"/>
    <property type="match status" value="1"/>
</dbReference>
<dbReference type="PANTHER" id="PTHR46244:SF3">
    <property type="entry name" value="PHOSPHOENOLPYRUVATE-PROTEIN PHOSPHOTRANSFERASE"/>
    <property type="match status" value="1"/>
</dbReference>
<dbReference type="Pfam" id="PF05524">
    <property type="entry name" value="PEP-utilisers_N"/>
    <property type="match status" value="1"/>
</dbReference>
<dbReference type="Pfam" id="PF00391">
    <property type="entry name" value="PEP-utilizers"/>
    <property type="match status" value="1"/>
</dbReference>
<dbReference type="Pfam" id="PF02896">
    <property type="entry name" value="PEP-utilizers_C"/>
    <property type="match status" value="1"/>
</dbReference>
<dbReference type="PIRSF" id="PIRSF000732">
    <property type="entry name" value="PTS_enzyme_I"/>
    <property type="match status" value="1"/>
</dbReference>
<dbReference type="PRINTS" id="PR01736">
    <property type="entry name" value="PHPHTRNFRASE"/>
</dbReference>
<dbReference type="SUPFAM" id="SSF47831">
    <property type="entry name" value="Enzyme I of the PEP:sugar phosphotransferase system HPr-binding (sub)domain"/>
    <property type="match status" value="1"/>
</dbReference>
<dbReference type="SUPFAM" id="SSF51621">
    <property type="entry name" value="Phosphoenolpyruvate/pyruvate domain"/>
    <property type="match status" value="1"/>
</dbReference>
<dbReference type="SUPFAM" id="SSF52009">
    <property type="entry name" value="Phosphohistidine domain"/>
    <property type="match status" value="1"/>
</dbReference>
<dbReference type="PROSITE" id="PS00742">
    <property type="entry name" value="PEP_ENZYMES_2"/>
    <property type="match status" value="1"/>
</dbReference>
<dbReference type="PROSITE" id="PS00370">
    <property type="entry name" value="PEP_ENZYMES_PHOS_SITE"/>
    <property type="match status" value="1"/>
</dbReference>
<proteinExistence type="inferred from homology"/>
<organism>
    <name type="scientific">Mycoplasma pneumoniae (strain ATCC 29342 / M129 / Subtype 1)</name>
    <name type="common">Mycoplasmoides pneumoniae</name>
    <dbReference type="NCBI Taxonomy" id="272634"/>
    <lineage>
        <taxon>Bacteria</taxon>
        <taxon>Bacillati</taxon>
        <taxon>Mycoplasmatota</taxon>
        <taxon>Mycoplasmoidales</taxon>
        <taxon>Mycoplasmoidaceae</taxon>
        <taxon>Mycoplasmoides</taxon>
    </lineage>
</organism>
<reference key="1">
    <citation type="journal article" date="1996" name="Nucleic Acids Res.">
        <title>Complete sequence analysis of the genome of the bacterium Mycoplasma pneumoniae.</title>
        <authorList>
            <person name="Himmelreich R."/>
            <person name="Hilbert H."/>
            <person name="Plagens H."/>
            <person name="Pirkl E."/>
            <person name="Li B.-C."/>
            <person name="Herrmann R."/>
        </authorList>
    </citation>
    <scope>NUCLEOTIDE SEQUENCE [LARGE SCALE GENOMIC DNA]</scope>
    <source>
        <strain>ATCC 29342 / M129 / Subtype 1</strain>
    </source>
</reference>
<protein>
    <recommendedName>
        <fullName evidence="1">Phosphoenolpyruvate-protein phosphotransferase</fullName>
        <ecNumber evidence="1">2.7.3.9</ecNumber>
    </recommendedName>
    <alternativeName>
        <fullName evidence="1">Phosphotransferase system, enzyme I</fullName>
    </alternativeName>
</protein>
<sequence>MKKLSGIGVSDGMALAKAFLVKTPEFAVNKYLKHQLTKAQAKRLLDSAFKKAVKDLEEIKEITVNNINTEAGMIFDAHIQMLNDPTITEQLEQQLAQNVHPVIAVDTVFSQTATMFSQMQDKYFQERAADILDLRQRLLAYLTGQKPHDLVKIKSDVIIVAHDLTPSQTATLNKKYVKGFLTEIGGRTSHAAIMARSLEIPAVVGIKGITTKVKDGQIVGVDGRKGIAGLDLNSKDTTEWKKQKALEEKYQQELKQYTNKETVTLDGHAVVVAANIGNVKDMELACQYNTNGVGLFRTEFLYMNSQEWPDEETQYQAYKAVLEQAHGDLVIIRTLDIGGDKKLNYYEFPHEDNPFLGYRALRLTLDKQDIFKTQLRALLRAADHGQLGIMFPMVATLDELLQAKQLLNQVHQELGGNKQFKLGIMIEIPAAVLAANTLSHHVDFFSIGTNDLIQYSFAADRMNKNVSYLYQPLNPALLKLIYLTIEGGKVNDIWTGMCGEMAGEPLAIPLLLGLGLKEFSMSASSMFKARMIIAKLNYTECQTLAQKALTLANAKEVEKLVEKFFKKKDIFI</sequence>
<gene>
    <name type="primary">ptsI</name>
    <name type="ordered locus">MPN_627</name>
    <name type="ORF">MP215</name>
</gene>
<feature type="chain" id="PRO_0000147077" description="Phosphoenolpyruvate-protein phosphotransferase">
    <location>
        <begin position="1"/>
        <end position="572"/>
    </location>
</feature>
<feature type="active site" description="Tele-phosphohistidine intermediate" evidence="1">
    <location>
        <position position="190"/>
    </location>
</feature>
<feature type="active site" description="Proton donor" evidence="1">
    <location>
        <position position="498"/>
    </location>
</feature>
<feature type="binding site" evidence="2">
    <location>
        <position position="297"/>
    </location>
    <ligand>
        <name>phosphoenolpyruvate</name>
        <dbReference type="ChEBI" id="CHEBI:58702"/>
    </ligand>
</feature>
<feature type="binding site" evidence="1">
    <location>
        <position position="333"/>
    </location>
    <ligand>
        <name>phosphoenolpyruvate</name>
        <dbReference type="ChEBI" id="CHEBI:58702"/>
    </ligand>
</feature>
<feature type="binding site" evidence="1">
    <location>
        <position position="427"/>
    </location>
    <ligand>
        <name>Mg(2+)</name>
        <dbReference type="ChEBI" id="CHEBI:18420"/>
    </ligand>
</feature>
<feature type="binding site" evidence="1">
    <location>
        <begin position="450"/>
        <end position="451"/>
    </location>
    <ligand>
        <name>phosphoenolpyruvate</name>
        <dbReference type="ChEBI" id="CHEBI:58702"/>
    </ligand>
</feature>
<feature type="binding site" evidence="1">
    <location>
        <position position="451"/>
    </location>
    <ligand>
        <name>Mg(2+)</name>
        <dbReference type="ChEBI" id="CHEBI:18420"/>
    </ligand>
</feature>
<feature type="binding site" evidence="2">
    <location>
        <position position="461"/>
    </location>
    <ligand>
        <name>phosphoenolpyruvate</name>
        <dbReference type="ChEBI" id="CHEBI:58702"/>
    </ligand>
</feature>
<evidence type="ECO:0000250" key="1">
    <source>
        <dbReference type="UniProtKB" id="P08839"/>
    </source>
</evidence>
<evidence type="ECO:0000250" key="2">
    <source>
        <dbReference type="UniProtKB" id="P23533"/>
    </source>
</evidence>
<evidence type="ECO:0000305" key="3"/>
<comment type="function">
    <text evidence="1">General (non sugar-specific) component of the phosphoenolpyruvate-dependent sugar phosphotransferase system (sugar PTS). This major carbohydrate active-transport system catalyzes the phosphorylation of incoming sugar substrates concomitantly with their translocation across the cell membrane. Enzyme I transfers the phosphoryl group from phosphoenolpyruvate (PEP) to the phosphoryl carrier protein (HPr).</text>
</comment>
<comment type="catalytic activity">
    <reaction evidence="1">
        <text>L-histidyl-[protein] + phosphoenolpyruvate = N(pros)-phospho-L-histidyl-[protein] + pyruvate</text>
        <dbReference type="Rhea" id="RHEA:23880"/>
        <dbReference type="Rhea" id="RHEA-COMP:9745"/>
        <dbReference type="Rhea" id="RHEA-COMP:9746"/>
        <dbReference type="ChEBI" id="CHEBI:15361"/>
        <dbReference type="ChEBI" id="CHEBI:29979"/>
        <dbReference type="ChEBI" id="CHEBI:58702"/>
        <dbReference type="ChEBI" id="CHEBI:64837"/>
        <dbReference type="EC" id="2.7.3.9"/>
    </reaction>
</comment>
<comment type="cofactor">
    <cofactor evidence="1">
        <name>Mg(2+)</name>
        <dbReference type="ChEBI" id="CHEBI:18420"/>
    </cofactor>
</comment>
<comment type="subunit">
    <text evidence="1">Homodimer.</text>
</comment>
<comment type="subcellular location">
    <subcellularLocation>
        <location evidence="3">Cytoplasm</location>
    </subcellularLocation>
</comment>
<comment type="domain">
    <text evidence="1">The N-terminal domain contains the HPr binding site, the central domain the pyrophosphate/phosphate carrier histidine, and the C-terminal domain the pyruvate binding site.</text>
</comment>
<comment type="miscellaneous">
    <text evidence="1">The reaction takes place in three steps, mediated by a phosphocarrier histidine residue located on the surface of the central domain. The two first partial reactions are catalyzed at an active site located on the N-terminal domain, and the third partial reaction is catalyzed at an active site located on the C-terminal domain. For catalytic turnover, the central domain swivels from the concave surface of the N-terminal domain to that of the C-terminal domain.</text>
</comment>
<comment type="similarity">
    <text evidence="3">Belongs to the PEP-utilizing enzyme family.</text>
</comment>
<keyword id="KW-0963">Cytoplasm</keyword>
<keyword id="KW-0418">Kinase</keyword>
<keyword id="KW-0460">Magnesium</keyword>
<keyword id="KW-0479">Metal-binding</keyword>
<keyword id="KW-0598">Phosphotransferase system</keyword>
<keyword id="KW-1185">Reference proteome</keyword>
<keyword id="KW-0762">Sugar transport</keyword>
<keyword id="KW-0808">Transferase</keyword>
<keyword id="KW-0813">Transport</keyword>
<name>PT1_MYCPN</name>
<accession>P75168</accession>